<name>CCML_SYNE7</name>
<reference key="1">
    <citation type="journal article" date="1993" name="J. Bacteriol.">
        <title>Analysis of a genomic DNA region from the cyanobacterium Synechococcus sp. strain PCC7942 involved in carboxysome assembly and function.</title>
        <authorList>
            <person name="Price G.D."/>
            <person name="Howitt S.M."/>
            <person name="Harrison K."/>
            <person name="Badger M.R."/>
        </authorList>
    </citation>
    <scope>NUCLEOTIDE SEQUENCE [GENOMIC DNA]</scope>
    <scope>DISRUPTION PHENOTYPE</scope>
    <source>
        <strain>ATCC 33912 / PCC 7942 / FACHB-805</strain>
    </source>
</reference>
<reference key="2">
    <citation type="submission" date="2005-08" db="EMBL/GenBank/DDBJ databases">
        <title>Complete sequence of chromosome 1 of Synechococcus elongatus PCC 7942.</title>
        <authorList>
            <consortium name="US DOE Joint Genome Institute"/>
            <person name="Copeland A."/>
            <person name="Lucas S."/>
            <person name="Lapidus A."/>
            <person name="Barry K."/>
            <person name="Detter J.C."/>
            <person name="Glavina T."/>
            <person name="Hammon N."/>
            <person name="Israni S."/>
            <person name="Pitluck S."/>
            <person name="Schmutz J."/>
            <person name="Larimer F."/>
            <person name="Land M."/>
            <person name="Kyrpides N."/>
            <person name="Lykidis A."/>
            <person name="Golden S."/>
            <person name="Richardson P."/>
        </authorList>
    </citation>
    <scope>NUCLEOTIDE SEQUENCE [LARGE SCALE GENOMIC DNA]</scope>
    <source>
        <strain>ATCC 33912 / PCC 7942 / FACHB-805</strain>
    </source>
</reference>
<reference key="3">
    <citation type="journal article" date="2013" name="Cell">
        <title>Biogenesis of a bacterial organelle: the carboxysome assembly pathway.</title>
        <authorList>
            <person name="Cameron J.C."/>
            <person name="Wilson S.C."/>
            <person name="Bernstein S.L."/>
            <person name="Kerfeld C.A."/>
        </authorList>
    </citation>
    <scope>CARBOXYSOME ASSEMBLY PROCESS</scope>
    <scope>FUNCTION</scope>
    <scope>DISRUPTION PHENOTYPE</scope>
    <source>
        <strain>ATCC 33912 / PCC 7942 / FACHB-805</strain>
    </source>
</reference>
<reference key="4">
    <citation type="journal article" date="2017" name="Nanoscale">
        <title>Direct characterization of the native structure and mechanics of cyanobacterial carboxysomes.</title>
        <authorList>
            <person name="Faulkner M."/>
            <person name="Rodriguez-Ramos J."/>
            <person name="Dykes G.F."/>
            <person name="Owen S.V."/>
            <person name="Casella S."/>
            <person name="Simpson D.M."/>
            <person name="Beynon R.J."/>
            <person name="Liu L.N."/>
        </authorList>
    </citation>
    <scope>SUBCELLULAR LOCATION</scope>
    <source>
        <strain>ATCC 33912 / PCC 7942 / FACHB-805</strain>
    </source>
</reference>
<reference key="5">
    <citation type="journal article" date="2018" name="Front. Plant Sci.">
        <title>Engineering and Modulating Functional Cyanobacterial CO2-Fixing Organelles.</title>
        <authorList>
            <person name="Fang Y."/>
            <person name="Huang F."/>
            <person name="Faulkner M."/>
            <person name="Jiang Q."/>
            <person name="Dykes G.F."/>
            <person name="Yang M."/>
            <person name="Liu L.N."/>
        </authorList>
    </citation>
    <scope>BIOTECHNOLOGY</scope>
    <source>
        <strain>ATCC 33912 / PCC 7942 / FACHB-805</strain>
    </source>
</reference>
<reference key="6">
    <citation type="journal article" date="2019" name="Plant Cell">
        <title>Single-Organelle Quantification Reveals Stoichiometric and Structural Variability of Carboxysomes Dependent on the Environment.</title>
        <authorList>
            <person name="Sun Y."/>
            <person name="Wollman A.J.M."/>
            <person name="Huang F."/>
            <person name="Leake M.C."/>
            <person name="Liu L.N."/>
        </authorList>
    </citation>
    <scope>SUBUNIT</scope>
    <scope>SUBCELLULAR LOCATION</scope>
    <scope>INDUCTION</scope>
    <source>
        <strain>ATCC 33912 / PCC 7942 / FACHB-805</strain>
    </source>
</reference>
<dbReference type="EMBL" id="M96929">
    <property type="protein sequence ID" value="AAA27305.1"/>
    <property type="molecule type" value="Genomic_DNA"/>
</dbReference>
<dbReference type="EMBL" id="CP000100">
    <property type="protein sequence ID" value="ABB57452.1"/>
    <property type="molecule type" value="Genomic_DNA"/>
</dbReference>
<dbReference type="PIR" id="C36904">
    <property type="entry name" value="C36904"/>
</dbReference>
<dbReference type="RefSeq" id="WP_011242448.1">
    <property type="nucleotide sequence ID" value="NZ_JACJTX010000004.1"/>
</dbReference>
<dbReference type="SMR" id="Q03512"/>
<dbReference type="STRING" id="1140.Synpcc7942_1422"/>
<dbReference type="TCDB" id="1.S.5.1.1">
    <property type="family name" value="the bacterial microcompartment shell/pore-forming protein 5 (pfam00936) (bmc-sp5) family"/>
</dbReference>
<dbReference type="PaxDb" id="1140-Synpcc7942_1422"/>
<dbReference type="KEGG" id="syf:Synpcc7942_1422"/>
<dbReference type="eggNOG" id="COG4576">
    <property type="taxonomic scope" value="Bacteria"/>
</dbReference>
<dbReference type="HOGENOM" id="CLU_148498_0_1_3"/>
<dbReference type="OrthoDB" id="196195at2"/>
<dbReference type="BioCyc" id="SYNEL:SYNPCC7942_1422-MONOMER"/>
<dbReference type="Proteomes" id="UP000889800">
    <property type="component" value="Chromosome"/>
</dbReference>
<dbReference type="GO" id="GO:0031470">
    <property type="term" value="C:carboxysome"/>
    <property type="evidence" value="ECO:0000314"/>
    <property type="project" value="UniProtKB"/>
</dbReference>
<dbReference type="GO" id="GO:0043886">
    <property type="term" value="F:structural constituent of carboxysome shell"/>
    <property type="evidence" value="ECO:0000315"/>
    <property type="project" value="UniProtKB"/>
</dbReference>
<dbReference type="GO" id="GO:0015977">
    <property type="term" value="P:carbon fixation"/>
    <property type="evidence" value="ECO:0007669"/>
    <property type="project" value="UniProtKB-UniRule"/>
</dbReference>
<dbReference type="GO" id="GO:0015979">
    <property type="term" value="P:photosynthesis"/>
    <property type="evidence" value="ECO:0007669"/>
    <property type="project" value="UniProtKB-KW"/>
</dbReference>
<dbReference type="CDD" id="cd01614">
    <property type="entry name" value="EutN_CcmL"/>
    <property type="match status" value="1"/>
</dbReference>
<dbReference type="Gene3D" id="2.40.50.220">
    <property type="entry name" value="EutN/Ccml"/>
    <property type="match status" value="1"/>
</dbReference>
<dbReference type="HAMAP" id="MF_00858">
    <property type="entry name" value="CcmL"/>
    <property type="match status" value="1"/>
</dbReference>
<dbReference type="InterPro" id="IPR046387">
    <property type="entry name" value="CcmL"/>
</dbReference>
<dbReference type="InterPro" id="IPR004992">
    <property type="entry name" value="EutN_CcmL"/>
</dbReference>
<dbReference type="InterPro" id="IPR036677">
    <property type="entry name" value="EutN_CcmL_sf"/>
</dbReference>
<dbReference type="PANTHER" id="PTHR36539:SF1">
    <property type="entry name" value="BACTERIAL MICROCOMPARTMENT SHELL VERTEX PROTEIN EUTN"/>
    <property type="match status" value="1"/>
</dbReference>
<dbReference type="PANTHER" id="PTHR36539">
    <property type="entry name" value="ETHANOLAMINE UTILIZATION PROTEIN EUTN"/>
    <property type="match status" value="1"/>
</dbReference>
<dbReference type="Pfam" id="PF03319">
    <property type="entry name" value="EutN_CcmL"/>
    <property type="match status" value="1"/>
</dbReference>
<dbReference type="SUPFAM" id="SSF159133">
    <property type="entry name" value="EutN/CcmL-like"/>
    <property type="match status" value="1"/>
</dbReference>
<dbReference type="PROSITE" id="PS51932">
    <property type="entry name" value="BMV"/>
    <property type="match status" value="1"/>
</dbReference>
<gene>
    <name evidence="2 8" type="primary">ccmL</name>
    <name type="ordered locus">Synpcc7942_1422</name>
</gene>
<proteinExistence type="evidence at protein level"/>
<sequence length="99" mass="11016">MRIAKVRGTVVSTYKEPSLQGVKFLVVQFLDEAGQALQEYEVAADMVGAGVDEWVLISRGSQARHVRDCQERPVDAAVIAIIDTVNVENRSVYDKREHS</sequence>
<keyword id="KW-1283">Bacterial microcompartment</keyword>
<keyword id="KW-0120">Carbon dioxide fixation</keyword>
<keyword id="KW-1282">Carboxysome</keyword>
<keyword id="KW-0602">Photosynthesis</keyword>
<keyword id="KW-1185">Reference proteome</keyword>
<feature type="chain" id="PRO_0000089426" description="Carboxysome shell vertex protein CcmL">
    <location>
        <begin position="1"/>
        <end position="99"/>
    </location>
</feature>
<feature type="domain" description="BMV" evidence="2">
    <location>
        <begin position="1"/>
        <end position="83"/>
    </location>
</feature>
<accession>Q03512</accession>
<accession>Q31NB7</accession>
<protein>
    <recommendedName>
        <fullName evidence="2">Carboxysome shell vertex protein CcmL</fullName>
    </recommendedName>
    <alternativeName>
        <fullName evidence="2">Carbon dioxide concentrating mechanism protein CcmL</fullName>
    </alternativeName>
</protein>
<evidence type="ECO:0000250" key="1">
    <source>
        <dbReference type="UniProtKB" id="P72759"/>
    </source>
</evidence>
<evidence type="ECO:0000255" key="2">
    <source>
        <dbReference type="HAMAP-Rule" id="MF_00858"/>
    </source>
</evidence>
<evidence type="ECO:0000269" key="3">
    <source>
    </source>
</evidence>
<evidence type="ECO:0000269" key="4">
    <source>
    </source>
</evidence>
<evidence type="ECO:0000269" key="5">
    <source>
    </source>
</evidence>
<evidence type="ECO:0000269" key="6">
    <source>
    </source>
</evidence>
<evidence type="ECO:0000269" key="7">
    <source>
    </source>
</evidence>
<evidence type="ECO:0000303" key="8">
    <source>
    </source>
</evidence>
<evidence type="ECO:0000305" key="9">
    <source>
    </source>
</evidence>
<evidence type="ECO:0000305" key="10">
    <source>
    </source>
</evidence>
<organism>
    <name type="scientific">Synechococcus elongatus (strain ATCC 33912 / PCC 7942 / FACHB-805)</name>
    <name type="common">Anacystis nidulans R2</name>
    <dbReference type="NCBI Taxonomy" id="1140"/>
    <lineage>
        <taxon>Bacteria</taxon>
        <taxon>Bacillati</taxon>
        <taxon>Cyanobacteriota</taxon>
        <taxon>Cyanophyceae</taxon>
        <taxon>Synechococcales</taxon>
        <taxon>Synechococcaceae</taxon>
        <taxon>Synechococcus</taxon>
    </lineage>
</organism>
<comment type="function">
    <text evidence="1 2 9">Probably forms vertices in the carboxysome, a polyhedral inclusion where RuBisCO (ribulose bisphosphate carboxylase, rbcL-rbcS) is sequestered. Has been modeled to induce curvature upon insertion into an otherwise flat hexagonal molecular layer of CcmK subunits.</text>
</comment>
<comment type="function">
    <text evidence="3">Beta-carboxysome assembly initiates when soluble RuBisCO is condensed into a liquid matrix in a pre-carboxysome by the RbcS-like domains of probably both CcmM58 and CcmM35. CcmN interacts with the N-terminus of CcmM58, and then recruits the CcmK2 major shell protein via CcmN's encapsulation peptide. Shell formation requires CcmK proteins and CcmO. CcmL caps the otherwise elongated carboxysome. Once fully encapsulated carboxysomes are formed, they migrate within the cell probably via interactions with the cytoskeleton.</text>
</comment>
<comment type="subunit">
    <text evidence="1 10">Homopentamer (Probable). Interacts with full-length CcmM (By similarity).</text>
</comment>
<comment type="subcellular location">
    <subcellularLocation>
        <location evidence="2 4 6">Carboxysome</location>
    </subcellularLocation>
    <text evidence="3 9">This cyanobacterium makes beta-type carboxysomes (PubMed:24267892). Probably forms vertices in the polyhedral carboxysome (Probable).</text>
</comment>
<comment type="induction">
    <text evidence="6">Carboxysome size and components vary with growth conditions. When grown in ambient air at medium light (50 uE meter(-2) second(-1)) there are 7.4 units of this protein per carboxysome, the numbers are stable under low light, and increase under high light and high CO(2) (at protein level).</text>
</comment>
<comment type="domain">
    <text evidence="1">The tight homopentamer forms a pore with an opening of about 5 Angstroms in diameter which opens into a wider tunnel at the base of the truncated pyramid. The pore is positively charged.</text>
</comment>
<comment type="disruption phenotype">
    <text evidence="3 7">An insertion in this gene leads to rod-shaped carboxysomes and an inability to grow in normal air, called a high-CO(2) requiring phenotype, HCR. When ccmL-ccmM-ccmN-ccmO are deleted no carboxysomes form, cells are HCR and RuBisCO is soluble. Both mutants grow on 2% CO(2).</text>
</comment>
<comment type="biotechnology">
    <text evidence="5">Heterologous expression of 12 carboxysomal genes in E.coli (ccaA, ccmK2, ccmK3, ccmK4, ccmL, ccmM, ccmN, ccmO, ccmP, rbcL, rbcS, rbcX) leads to the formation of bodies that resemble carboxysomes, have densely packed paracrystalline arrays and RuBisCO activity. These structures open the door to generating carboxysomes in plant cells to increase their photosynthesis and productivity, as well as tailoring bacterial microcompartments to specific metabolic needs and molecule delivery.</text>
</comment>
<comment type="similarity">
    <text evidence="2">Belongs to the CcmL/EutN family. CcmL subfamily.</text>
</comment>